<organism>
    <name type="scientific">Arabidopsis thaliana</name>
    <name type="common">Mouse-ear cress</name>
    <dbReference type="NCBI Taxonomy" id="3702"/>
    <lineage>
        <taxon>Eukaryota</taxon>
        <taxon>Viridiplantae</taxon>
        <taxon>Streptophyta</taxon>
        <taxon>Embryophyta</taxon>
        <taxon>Tracheophyta</taxon>
        <taxon>Spermatophyta</taxon>
        <taxon>Magnoliopsida</taxon>
        <taxon>eudicotyledons</taxon>
        <taxon>Gunneridae</taxon>
        <taxon>Pentapetalae</taxon>
        <taxon>rosids</taxon>
        <taxon>malvids</taxon>
        <taxon>Brassicales</taxon>
        <taxon>Brassicaceae</taxon>
        <taxon>Camelineae</taxon>
        <taxon>Arabidopsis</taxon>
    </lineage>
</organism>
<sequence>MAIISEVEEESSSSRPMIFPFRATLSSANPLGFLEKVFDFLGEQSDFLKKPSAEDEIVVAVRAAKEKLKKAEKKKAEKESVKPVEKKAEKEIVKLVEKKVEKESVKPTIAASSAEPIEVEKPKEEEEKKESGPIVPNKGNGTDLENYSWIQNLQEVTVNIPVPTGTKARTVVCEIKKNRLKVGLKGQDPIVDGELYRSVKPDDCYWNIEDQKVISILLTKSDQMEWWKCCVKGEPEIDTQKVEPETSKLGDLDPETRSTVEKMMFDQRQKQMGLPTSEELQKQEILKKFMSEHPEMDFSNAKFN</sequence>
<reference key="1">
    <citation type="journal article" date="2009" name="Plant Cell">
        <title>Partitioning the apical domain of the Arabidopsis embryo requires the BOBBER1 NudC domain protein.</title>
        <authorList>
            <person name="Jurkuta R.J."/>
            <person name="Kaplinsky N.J."/>
            <person name="Spindel J.E."/>
            <person name="Barton M.K."/>
        </authorList>
    </citation>
    <scope>NUCLEOTIDE SEQUENCE [GENOMIC DNA]</scope>
    <scope>FUNCTION</scope>
    <scope>DEVELOPMENTAL STAGE</scope>
    <scope>SUBCELLULAR LOCATION</scope>
    <scope>DISRUPTION PHENOTYPE</scope>
    <source>
        <strain>cv. Landsberg erecta</strain>
    </source>
</reference>
<reference key="2">
    <citation type="journal article" date="2000" name="DNA Res.">
        <title>Structural analysis of Arabidopsis thaliana chromosome 5. X. Sequence features of the regions of 3,076,755 bp covered by sixty P1 and TAC clones.</title>
        <authorList>
            <person name="Sato S."/>
            <person name="Nakamura Y."/>
            <person name="Kaneko T."/>
            <person name="Katoh T."/>
            <person name="Asamizu E."/>
            <person name="Kotani H."/>
            <person name="Tabata S."/>
        </authorList>
    </citation>
    <scope>NUCLEOTIDE SEQUENCE [LARGE SCALE GENOMIC DNA]</scope>
    <source>
        <strain>cv. Columbia</strain>
    </source>
</reference>
<reference key="3">
    <citation type="journal article" date="2017" name="Plant J.">
        <title>Araport11: a complete reannotation of the Arabidopsis thaliana reference genome.</title>
        <authorList>
            <person name="Cheng C.Y."/>
            <person name="Krishnakumar V."/>
            <person name="Chan A.P."/>
            <person name="Thibaud-Nissen F."/>
            <person name="Schobel S."/>
            <person name="Town C.D."/>
        </authorList>
    </citation>
    <scope>GENOME REANNOTATION</scope>
    <source>
        <strain>cv. Columbia</strain>
    </source>
</reference>
<reference key="4">
    <citation type="journal article" date="2003" name="Science">
        <title>Empirical analysis of transcriptional activity in the Arabidopsis genome.</title>
        <authorList>
            <person name="Yamada K."/>
            <person name="Lim J."/>
            <person name="Dale J.M."/>
            <person name="Chen H."/>
            <person name="Shinn P."/>
            <person name="Palm C.J."/>
            <person name="Southwick A.M."/>
            <person name="Wu H.C."/>
            <person name="Kim C.J."/>
            <person name="Nguyen M."/>
            <person name="Pham P.K."/>
            <person name="Cheuk R.F."/>
            <person name="Karlin-Newmann G."/>
            <person name="Liu S.X."/>
            <person name="Lam B."/>
            <person name="Sakano H."/>
            <person name="Wu T."/>
            <person name="Yu G."/>
            <person name="Miranda M."/>
            <person name="Quach H.L."/>
            <person name="Tripp M."/>
            <person name="Chang C.H."/>
            <person name="Lee J.M."/>
            <person name="Toriumi M.J."/>
            <person name="Chan M.M."/>
            <person name="Tang C.C."/>
            <person name="Onodera C.S."/>
            <person name="Deng J.M."/>
            <person name="Akiyama K."/>
            <person name="Ansari Y."/>
            <person name="Arakawa T."/>
            <person name="Banh J."/>
            <person name="Banno F."/>
            <person name="Bowser L."/>
            <person name="Brooks S.Y."/>
            <person name="Carninci P."/>
            <person name="Chao Q."/>
            <person name="Choy N."/>
            <person name="Enju A."/>
            <person name="Goldsmith A.D."/>
            <person name="Gurjal M."/>
            <person name="Hansen N.F."/>
            <person name="Hayashizaki Y."/>
            <person name="Johnson-Hopson C."/>
            <person name="Hsuan V.W."/>
            <person name="Iida K."/>
            <person name="Karnes M."/>
            <person name="Khan S."/>
            <person name="Koesema E."/>
            <person name="Ishida J."/>
            <person name="Jiang P.X."/>
            <person name="Jones T."/>
            <person name="Kawai J."/>
            <person name="Kamiya A."/>
            <person name="Meyers C."/>
            <person name="Nakajima M."/>
            <person name="Narusaka M."/>
            <person name="Seki M."/>
            <person name="Sakurai T."/>
            <person name="Satou M."/>
            <person name="Tamse R."/>
            <person name="Vaysberg M."/>
            <person name="Wallender E.K."/>
            <person name="Wong C."/>
            <person name="Yamamura Y."/>
            <person name="Yuan S."/>
            <person name="Shinozaki K."/>
            <person name="Davis R.W."/>
            <person name="Theologis A."/>
            <person name="Ecker J.R."/>
        </authorList>
    </citation>
    <scope>NUCLEOTIDE SEQUENCE [LARGE SCALE MRNA]</scope>
    <source>
        <strain>cv. Columbia</strain>
    </source>
</reference>
<reference key="5">
    <citation type="submission" date="2006-07" db="EMBL/GenBank/DDBJ databases">
        <title>Large-scale analysis of RIKEN Arabidopsis full-length (RAFL) cDNAs.</title>
        <authorList>
            <person name="Totoki Y."/>
            <person name="Seki M."/>
            <person name="Ishida J."/>
            <person name="Nakajima M."/>
            <person name="Enju A."/>
            <person name="Kamiya A."/>
            <person name="Narusaka M."/>
            <person name="Shin-i T."/>
            <person name="Nakagawa M."/>
            <person name="Sakamoto N."/>
            <person name="Oishi K."/>
            <person name="Kohara Y."/>
            <person name="Kobayashi M."/>
            <person name="Toyoda A."/>
            <person name="Sakaki Y."/>
            <person name="Sakurai T."/>
            <person name="Iida K."/>
            <person name="Akiyama K."/>
            <person name="Satou M."/>
            <person name="Toyoda T."/>
            <person name="Konagaya A."/>
            <person name="Carninci P."/>
            <person name="Kawai J."/>
            <person name="Hayashizaki Y."/>
            <person name="Shinozaki K."/>
        </authorList>
    </citation>
    <scope>NUCLEOTIDE SEQUENCE [LARGE SCALE MRNA]</scope>
    <source>
        <strain>cv. Columbia</strain>
    </source>
</reference>
<reference key="6">
    <citation type="submission" date="2002-03" db="EMBL/GenBank/DDBJ databases">
        <title>Full-length cDNA from Arabidopsis thaliana.</title>
        <authorList>
            <person name="Brover V.V."/>
            <person name="Troukhan M.E."/>
            <person name="Alexandrov N.A."/>
            <person name="Lu Y.-P."/>
            <person name="Flavell R.B."/>
            <person name="Feldmann K.A."/>
        </authorList>
    </citation>
    <scope>NUCLEOTIDE SEQUENCE [LARGE SCALE MRNA]</scope>
</reference>
<reference key="7">
    <citation type="journal article" date="2009" name="Plant Physiol.">
        <title>BOBBER1 is a noncanonical Arabidopsis small heat shock protein required for both development and thermotolerance.</title>
        <authorList>
            <person name="Perez D.E."/>
            <person name="Hoyer J.S."/>
            <person name="Johnson A.I."/>
            <person name="Moody Z.R."/>
            <person name="Lopez J."/>
            <person name="Kaplinsky N.J."/>
        </authorList>
    </citation>
    <scope>FUNCTION</scope>
    <scope>SUBCELLULAR LOCATION</scope>
    <scope>TISSUE SPECIFICITY</scope>
    <scope>MUTAGENESIS OF GLY-141</scope>
    <scope>INDUCTION BY HIGH TEMPERATURE</scope>
    <scope>DISRUPTION PHENOTYPE</scope>
    <source>
        <strain>cv. Columbia</strain>
    </source>
</reference>
<reference key="8">
    <citation type="journal article" date="2009" name="Plant Signal. Behav.">
        <title>Temperature compensation of auxin dependent developmental patterning.</title>
        <authorList>
            <person name="Kaplinsky N.J."/>
        </authorList>
    </citation>
    <scope>FUNCTION</scope>
    <source>
        <strain>cv. Columbia</strain>
    </source>
</reference>
<reference key="9">
    <citation type="journal article" date="2012" name="Mol. Cell. Proteomics">
        <title>Comparative large-scale characterisation of plant vs. mammal proteins reveals similar and idiosyncratic N-alpha acetylation features.</title>
        <authorList>
            <person name="Bienvenut W.V."/>
            <person name="Sumpton D."/>
            <person name="Martinez A."/>
            <person name="Lilla S."/>
            <person name="Espagne C."/>
            <person name="Meinnel T."/>
            <person name="Giglione C."/>
        </authorList>
    </citation>
    <scope>ACETYLATION [LARGE SCALE ANALYSIS] AT ALA-2</scope>
    <scope>CLEAVAGE OF INITIATOR METHIONINE [LARGE SCALE ANALYSIS]</scope>
    <scope>IDENTIFICATION BY MASS SPECTROMETRY [LARGE SCALE ANALYSIS]</scope>
</reference>
<comment type="function">
    <text evidence="4 5 6">Small heat shock protein required for the establishment of auxin gradients and for patterning of the apical domain of the embryo. Involved in the specification of the cotyledon primordia. Also required for normal inflorescence and floral meristem function, normal developmental patterning and thermotolerance. Acts as a molecular chaperone.</text>
</comment>
<comment type="subcellular location">
    <subcellularLocation>
        <location>Cytoplasm</location>
    </subcellularLocation>
    <subcellularLocation>
        <location>Cytoplasmic granule</location>
    </subcellularLocation>
    <text>cytoplasmic at basal temperatures, but forms heat shock granules containing canonical small heat shock proteins at high temperatures.</text>
</comment>
<comment type="tissue specificity">
    <text evidence="4">Expressed in all seedling tissues with highest expression levels at the root tip.</text>
</comment>
<comment type="developmental stage">
    <text evidence="5">Expressed during early embryo development, from the eight-cell stage until the end of the heart stage.</text>
</comment>
<comment type="induction">
    <text evidence="4">Up-regulated by heat shock.</text>
</comment>
<comment type="disruption phenotype">
    <text evidence="4 5">Embryo lethal.</text>
</comment>
<gene>
    <name type="primary">BOB1</name>
    <name type="ordered locus">At5g53400</name>
    <name type="ORF">MYN8.1</name>
</gene>
<name>BOB1_ARATH</name>
<proteinExistence type="evidence at protein level"/>
<feature type="initiator methionine" description="Removed" evidence="8">
    <location>
        <position position="1"/>
    </location>
</feature>
<feature type="chain" id="PRO_0000420923" description="Protein BOBBER 1">
    <location>
        <begin position="2"/>
        <end position="304"/>
    </location>
</feature>
<feature type="domain" description="CS" evidence="2">
    <location>
        <begin position="142"/>
        <end position="231"/>
    </location>
</feature>
<feature type="region of interest" description="Disordered" evidence="3">
    <location>
        <begin position="111"/>
        <end position="141"/>
    </location>
</feature>
<feature type="coiled-coil region" evidence="1">
    <location>
        <begin position="54"/>
        <end position="106"/>
    </location>
</feature>
<feature type="compositionally biased region" description="Basic and acidic residues" evidence="3">
    <location>
        <begin position="118"/>
        <end position="131"/>
    </location>
</feature>
<feature type="modified residue" description="N-acetylalanine" evidence="8">
    <location>
        <position position="2"/>
    </location>
</feature>
<feature type="mutagenesis site" description="In bob1-3; general growth defects and reduced fertility, but no effect on the in vitro chaperone activity." evidence="4">
    <original>G</original>
    <variation>E</variation>
    <location>
        <position position="141"/>
    </location>
</feature>
<feature type="sequence conflict" description="In Ref. 6; AAM65278." evidence="7" ref="6">
    <original>I</original>
    <variation>M</variation>
    <location>
        <position position="109"/>
    </location>
</feature>
<feature type="sequence conflict" description="In Ref. 6; AAM65278." evidence="7" ref="6">
    <original>E</original>
    <variation>D</variation>
    <location>
        <position position="124"/>
    </location>
</feature>
<protein>
    <recommendedName>
        <fullName>Protein BOBBER 1</fullName>
    </recommendedName>
</protein>
<dbReference type="EMBL" id="AB020754">
    <property type="protein sequence ID" value="BAA97317.1"/>
    <property type="molecule type" value="Genomic_DNA"/>
</dbReference>
<dbReference type="EMBL" id="CP002688">
    <property type="protein sequence ID" value="AED96348.1"/>
    <property type="molecule type" value="Genomic_DNA"/>
</dbReference>
<dbReference type="EMBL" id="BT003074">
    <property type="protein sequence ID" value="AAO23639.1"/>
    <property type="molecule type" value="mRNA"/>
</dbReference>
<dbReference type="EMBL" id="AK227305">
    <property type="protein sequence ID" value="BAE99321.1"/>
    <property type="molecule type" value="mRNA"/>
</dbReference>
<dbReference type="EMBL" id="AY087741">
    <property type="protein sequence ID" value="AAM65278.1"/>
    <property type="molecule type" value="mRNA"/>
</dbReference>
<dbReference type="RefSeq" id="NP_200152.1">
    <property type="nucleotide sequence ID" value="NM_124719.4"/>
</dbReference>
<dbReference type="SMR" id="Q9LV09"/>
<dbReference type="BioGRID" id="20666">
    <property type="interactions" value="7"/>
</dbReference>
<dbReference type="FunCoup" id="Q9LV09">
    <property type="interactions" value="4262"/>
</dbReference>
<dbReference type="IntAct" id="Q9LV09">
    <property type="interactions" value="1"/>
</dbReference>
<dbReference type="STRING" id="3702.Q9LV09"/>
<dbReference type="iPTMnet" id="Q9LV09"/>
<dbReference type="PaxDb" id="3702-AT5G53400.1"/>
<dbReference type="ProteomicsDB" id="240435"/>
<dbReference type="EnsemblPlants" id="AT5G53400.1">
    <property type="protein sequence ID" value="AT5G53400.1"/>
    <property type="gene ID" value="AT5G53400"/>
</dbReference>
<dbReference type="GeneID" id="835421"/>
<dbReference type="Gramene" id="AT5G53400.1">
    <property type="protein sequence ID" value="AT5G53400.1"/>
    <property type="gene ID" value="AT5G53400"/>
</dbReference>
<dbReference type="KEGG" id="ath:AT5G53400"/>
<dbReference type="Araport" id="AT5G53400"/>
<dbReference type="TAIR" id="AT5G53400">
    <property type="gene designation" value="BOB1"/>
</dbReference>
<dbReference type="eggNOG" id="KOG2265">
    <property type="taxonomic scope" value="Eukaryota"/>
</dbReference>
<dbReference type="HOGENOM" id="CLU_047332_1_1_1"/>
<dbReference type="InParanoid" id="Q9LV09"/>
<dbReference type="OMA" id="LWWDRLF"/>
<dbReference type="PhylomeDB" id="Q9LV09"/>
<dbReference type="PRO" id="PR:Q9LV09"/>
<dbReference type="Proteomes" id="UP000006548">
    <property type="component" value="Chromosome 5"/>
</dbReference>
<dbReference type="ExpressionAtlas" id="Q9LV09">
    <property type="expression patterns" value="baseline and differential"/>
</dbReference>
<dbReference type="GO" id="GO:0005737">
    <property type="term" value="C:cytoplasm"/>
    <property type="evidence" value="ECO:0000314"/>
    <property type="project" value="TAIR"/>
</dbReference>
<dbReference type="GO" id="GO:0032502">
    <property type="term" value="P:developmental process"/>
    <property type="evidence" value="ECO:0000315"/>
    <property type="project" value="TAIR"/>
</dbReference>
<dbReference type="GO" id="GO:0009880">
    <property type="term" value="P:embryonic pattern specification"/>
    <property type="evidence" value="ECO:0000315"/>
    <property type="project" value="TAIR"/>
</dbReference>
<dbReference type="GO" id="GO:0048461">
    <property type="term" value="P:flower structural organization"/>
    <property type="evidence" value="ECO:0000315"/>
    <property type="project" value="CACAO"/>
</dbReference>
<dbReference type="GO" id="GO:0010286">
    <property type="term" value="P:heat acclimation"/>
    <property type="evidence" value="ECO:0000315"/>
    <property type="project" value="CACAO"/>
</dbReference>
<dbReference type="GO" id="GO:0010450">
    <property type="term" value="P:inflorescence meristem growth"/>
    <property type="evidence" value="ECO:0000315"/>
    <property type="project" value="TAIR"/>
</dbReference>
<dbReference type="GO" id="GO:0009965">
    <property type="term" value="P:leaf morphogenesis"/>
    <property type="evidence" value="ECO:0000315"/>
    <property type="project" value="TAIR"/>
</dbReference>
<dbReference type="GO" id="GO:0009555">
    <property type="term" value="P:pollen development"/>
    <property type="evidence" value="ECO:0000315"/>
    <property type="project" value="TAIR"/>
</dbReference>
<dbReference type="GO" id="GO:0006457">
    <property type="term" value="P:protein folding"/>
    <property type="evidence" value="ECO:0000314"/>
    <property type="project" value="TAIR"/>
</dbReference>
<dbReference type="GO" id="GO:0009408">
    <property type="term" value="P:response to heat"/>
    <property type="evidence" value="ECO:0000315"/>
    <property type="project" value="TAIR"/>
</dbReference>
<dbReference type="GO" id="GO:0048833">
    <property type="term" value="P:specification of floral organ number"/>
    <property type="evidence" value="ECO:0000315"/>
    <property type="project" value="TAIR"/>
</dbReference>
<dbReference type="GO" id="GO:0048448">
    <property type="term" value="P:stamen morphogenesis"/>
    <property type="evidence" value="ECO:0000315"/>
    <property type="project" value="TAIR"/>
</dbReference>
<dbReference type="CDD" id="cd06467">
    <property type="entry name" value="p23_NUDC_like"/>
    <property type="match status" value="1"/>
</dbReference>
<dbReference type="FunFam" id="2.60.40.790:FF:000001">
    <property type="entry name" value="Nuclear migration protein nudC"/>
    <property type="match status" value="1"/>
</dbReference>
<dbReference type="Gene3D" id="2.60.40.790">
    <property type="match status" value="1"/>
</dbReference>
<dbReference type="InterPro" id="IPR007052">
    <property type="entry name" value="CS_dom"/>
</dbReference>
<dbReference type="InterPro" id="IPR008978">
    <property type="entry name" value="HSP20-like_chaperone"/>
</dbReference>
<dbReference type="InterPro" id="IPR037898">
    <property type="entry name" value="NudC_fam"/>
</dbReference>
<dbReference type="PANTHER" id="PTHR12356:SF3">
    <property type="entry name" value="NUCLEAR MIGRATION PROTEIN NUDC"/>
    <property type="match status" value="1"/>
</dbReference>
<dbReference type="PANTHER" id="PTHR12356">
    <property type="entry name" value="NUCLEAR MOVEMENT PROTEIN NUDC"/>
    <property type="match status" value="1"/>
</dbReference>
<dbReference type="Pfam" id="PF04969">
    <property type="entry name" value="CS"/>
    <property type="match status" value="1"/>
</dbReference>
<dbReference type="SUPFAM" id="SSF49764">
    <property type="entry name" value="HSP20-like chaperones"/>
    <property type="match status" value="1"/>
</dbReference>
<dbReference type="PROSITE" id="PS51203">
    <property type="entry name" value="CS"/>
    <property type="match status" value="1"/>
</dbReference>
<keyword id="KW-0007">Acetylation</keyword>
<keyword id="KW-0143">Chaperone</keyword>
<keyword id="KW-0175">Coiled coil</keyword>
<keyword id="KW-0963">Cytoplasm</keyword>
<keyword id="KW-0217">Developmental protein</keyword>
<keyword id="KW-1185">Reference proteome</keyword>
<evidence type="ECO:0000255" key="1"/>
<evidence type="ECO:0000255" key="2">
    <source>
        <dbReference type="PROSITE-ProRule" id="PRU00547"/>
    </source>
</evidence>
<evidence type="ECO:0000256" key="3">
    <source>
        <dbReference type="SAM" id="MobiDB-lite"/>
    </source>
</evidence>
<evidence type="ECO:0000269" key="4">
    <source>
    </source>
</evidence>
<evidence type="ECO:0000269" key="5">
    <source>
    </source>
</evidence>
<evidence type="ECO:0000269" key="6">
    <source>
    </source>
</evidence>
<evidence type="ECO:0000305" key="7"/>
<evidence type="ECO:0007744" key="8">
    <source>
    </source>
</evidence>
<accession>Q9LV09</accession>
<accession>Q8LAL5</accession>